<protein>
    <recommendedName>
        <fullName evidence="1">Co-chaperonin GroES</fullName>
    </recommendedName>
    <alternativeName>
        <fullName evidence="1">10 kDa chaperonin</fullName>
    </alternativeName>
    <alternativeName>
        <fullName evidence="1">Chaperonin-10</fullName>
        <shortName evidence="1">Cpn10</shortName>
    </alternativeName>
</protein>
<feature type="chain" id="PRO_1000129683" description="Co-chaperonin GroES">
    <location>
        <begin position="1"/>
        <end position="100"/>
    </location>
</feature>
<proteinExistence type="inferred from homology"/>
<name>CH10_MYCMM</name>
<dbReference type="EMBL" id="CP000854">
    <property type="protein sequence ID" value="ACC39581.1"/>
    <property type="molecule type" value="Genomic_DNA"/>
</dbReference>
<dbReference type="RefSeq" id="WP_011739140.1">
    <property type="nucleotide sequence ID" value="NC_010612.1"/>
</dbReference>
<dbReference type="SMR" id="B2HD09"/>
<dbReference type="STRING" id="216594.MMAR_1125"/>
<dbReference type="GeneID" id="34339136"/>
<dbReference type="GeneID" id="93438507"/>
<dbReference type="KEGG" id="mmi:MMAR_1125"/>
<dbReference type="eggNOG" id="COG0234">
    <property type="taxonomic scope" value="Bacteria"/>
</dbReference>
<dbReference type="HOGENOM" id="CLU_132825_2_0_11"/>
<dbReference type="OrthoDB" id="9806791at2"/>
<dbReference type="Proteomes" id="UP000001190">
    <property type="component" value="Chromosome"/>
</dbReference>
<dbReference type="GO" id="GO:0005737">
    <property type="term" value="C:cytoplasm"/>
    <property type="evidence" value="ECO:0007669"/>
    <property type="project" value="UniProtKB-SubCell"/>
</dbReference>
<dbReference type="GO" id="GO:0005524">
    <property type="term" value="F:ATP binding"/>
    <property type="evidence" value="ECO:0007669"/>
    <property type="project" value="InterPro"/>
</dbReference>
<dbReference type="GO" id="GO:0046872">
    <property type="term" value="F:metal ion binding"/>
    <property type="evidence" value="ECO:0007669"/>
    <property type="project" value="TreeGrafter"/>
</dbReference>
<dbReference type="GO" id="GO:0044183">
    <property type="term" value="F:protein folding chaperone"/>
    <property type="evidence" value="ECO:0007669"/>
    <property type="project" value="InterPro"/>
</dbReference>
<dbReference type="GO" id="GO:0051087">
    <property type="term" value="F:protein-folding chaperone binding"/>
    <property type="evidence" value="ECO:0007669"/>
    <property type="project" value="TreeGrafter"/>
</dbReference>
<dbReference type="GO" id="GO:0051082">
    <property type="term" value="F:unfolded protein binding"/>
    <property type="evidence" value="ECO:0007669"/>
    <property type="project" value="TreeGrafter"/>
</dbReference>
<dbReference type="GO" id="GO:0051085">
    <property type="term" value="P:chaperone cofactor-dependent protein refolding"/>
    <property type="evidence" value="ECO:0007669"/>
    <property type="project" value="TreeGrafter"/>
</dbReference>
<dbReference type="CDD" id="cd00320">
    <property type="entry name" value="cpn10"/>
    <property type="match status" value="1"/>
</dbReference>
<dbReference type="FunFam" id="2.30.33.40:FF:000001">
    <property type="entry name" value="10 kDa chaperonin"/>
    <property type="match status" value="1"/>
</dbReference>
<dbReference type="Gene3D" id="2.30.33.40">
    <property type="entry name" value="GroES chaperonin"/>
    <property type="match status" value="1"/>
</dbReference>
<dbReference type="HAMAP" id="MF_00580">
    <property type="entry name" value="CH10"/>
    <property type="match status" value="1"/>
</dbReference>
<dbReference type="InterPro" id="IPR020818">
    <property type="entry name" value="Chaperonin_GroES"/>
</dbReference>
<dbReference type="InterPro" id="IPR037124">
    <property type="entry name" value="Chaperonin_GroES_sf"/>
</dbReference>
<dbReference type="InterPro" id="IPR018369">
    <property type="entry name" value="Chaprnonin_Cpn10_CS"/>
</dbReference>
<dbReference type="InterPro" id="IPR011032">
    <property type="entry name" value="GroES-like_sf"/>
</dbReference>
<dbReference type="NCBIfam" id="NF001530">
    <property type="entry name" value="PRK00364.1-6"/>
    <property type="match status" value="1"/>
</dbReference>
<dbReference type="NCBIfam" id="NF001531">
    <property type="entry name" value="PRK00364.2-2"/>
    <property type="match status" value="1"/>
</dbReference>
<dbReference type="NCBIfam" id="NF001533">
    <property type="entry name" value="PRK00364.2-4"/>
    <property type="match status" value="1"/>
</dbReference>
<dbReference type="NCBIfam" id="NF001534">
    <property type="entry name" value="PRK00364.2-5"/>
    <property type="match status" value="1"/>
</dbReference>
<dbReference type="PANTHER" id="PTHR10772">
    <property type="entry name" value="10 KDA HEAT SHOCK PROTEIN"/>
    <property type="match status" value="1"/>
</dbReference>
<dbReference type="PANTHER" id="PTHR10772:SF58">
    <property type="entry name" value="CO-CHAPERONIN GROES"/>
    <property type="match status" value="1"/>
</dbReference>
<dbReference type="Pfam" id="PF00166">
    <property type="entry name" value="Cpn10"/>
    <property type="match status" value="1"/>
</dbReference>
<dbReference type="PRINTS" id="PR00297">
    <property type="entry name" value="CHAPERONIN10"/>
</dbReference>
<dbReference type="SMART" id="SM00883">
    <property type="entry name" value="Cpn10"/>
    <property type="match status" value="1"/>
</dbReference>
<dbReference type="SUPFAM" id="SSF50129">
    <property type="entry name" value="GroES-like"/>
    <property type="match status" value="1"/>
</dbReference>
<dbReference type="PROSITE" id="PS00681">
    <property type="entry name" value="CHAPERONINS_CPN10"/>
    <property type="match status" value="1"/>
</dbReference>
<accession>B2HD09</accession>
<reference key="1">
    <citation type="journal article" date="2008" name="Genome Res.">
        <title>Insights from the complete genome sequence of Mycobacterium marinum on the evolution of Mycobacterium tuberculosis.</title>
        <authorList>
            <person name="Stinear T.P."/>
            <person name="Seemann T."/>
            <person name="Harrison P.F."/>
            <person name="Jenkin G.A."/>
            <person name="Davies J.K."/>
            <person name="Johnson P.D."/>
            <person name="Abdellah Z."/>
            <person name="Arrowsmith C."/>
            <person name="Chillingworth T."/>
            <person name="Churcher C."/>
            <person name="Clarke K."/>
            <person name="Cronin A."/>
            <person name="Davis P."/>
            <person name="Goodhead I."/>
            <person name="Holroyd N."/>
            <person name="Jagels K."/>
            <person name="Lord A."/>
            <person name="Moule S."/>
            <person name="Mungall K."/>
            <person name="Norbertczak H."/>
            <person name="Quail M.A."/>
            <person name="Rabbinowitsch E."/>
            <person name="Walker D."/>
            <person name="White B."/>
            <person name="Whitehead S."/>
            <person name="Small P.L."/>
            <person name="Brosch R."/>
            <person name="Ramakrishnan L."/>
            <person name="Fischbach M.A."/>
            <person name="Parkhill J."/>
            <person name="Cole S.T."/>
        </authorList>
    </citation>
    <scope>NUCLEOTIDE SEQUENCE [LARGE SCALE GENOMIC DNA]</scope>
    <source>
        <strain>ATCC BAA-535 / M</strain>
    </source>
</reference>
<gene>
    <name evidence="1" type="primary">groES</name>
    <name evidence="1" type="synonym">groS</name>
    <name type="ordered locus">MMAR_1125</name>
</gene>
<comment type="function">
    <text evidence="1">Together with the chaperonin GroEL, plays an essential role in assisting protein folding. The GroEL-GroES system forms a nano-cage that allows encapsulation of the non-native substrate proteins and provides a physical environment optimized to promote and accelerate protein folding. GroES binds to the apical surface of the GroEL ring, thereby capping the opening of the GroEL channel.</text>
</comment>
<comment type="subunit">
    <text evidence="1">Heptamer of 7 subunits arranged in a ring. Interacts with the chaperonin GroEL.</text>
</comment>
<comment type="subcellular location">
    <subcellularLocation>
        <location evidence="1">Cytoplasm</location>
    </subcellularLocation>
</comment>
<comment type="similarity">
    <text evidence="1">Belongs to the GroES chaperonin family.</text>
</comment>
<evidence type="ECO:0000255" key="1">
    <source>
        <dbReference type="HAMAP-Rule" id="MF_00580"/>
    </source>
</evidence>
<keyword id="KW-0143">Chaperone</keyword>
<keyword id="KW-0963">Cytoplasm</keyword>
<keyword id="KW-1185">Reference proteome</keyword>
<sequence length="100" mass="10747">MAKVNIKPLEDKILVQANEAETTTASGLVIPDTAKEKPQEGTVVAVGPGRWDEDGEKRIPLDVAEGDTVIYSKYGGTEIKYGGEEYLILSARDVLAVVSK</sequence>
<organism>
    <name type="scientific">Mycobacterium marinum (strain ATCC BAA-535 / M)</name>
    <dbReference type="NCBI Taxonomy" id="216594"/>
    <lineage>
        <taxon>Bacteria</taxon>
        <taxon>Bacillati</taxon>
        <taxon>Actinomycetota</taxon>
        <taxon>Actinomycetes</taxon>
        <taxon>Mycobacteriales</taxon>
        <taxon>Mycobacteriaceae</taxon>
        <taxon>Mycobacterium</taxon>
        <taxon>Mycobacterium ulcerans group</taxon>
    </lineage>
</organism>